<protein>
    <recommendedName>
        <fullName evidence="1">Large ribosomal subunit protein uL6</fullName>
    </recommendedName>
    <alternativeName>
        <fullName evidence="2">50S ribosomal protein L6</fullName>
    </alternativeName>
</protein>
<evidence type="ECO:0000255" key="1">
    <source>
        <dbReference type="HAMAP-Rule" id="MF_01365"/>
    </source>
</evidence>
<evidence type="ECO:0000305" key="2"/>
<gene>
    <name evidence="1" type="primary">rplF</name>
    <name type="ordered locus">BMEI0772</name>
</gene>
<accession>Q8YHM5</accession>
<organism>
    <name type="scientific">Brucella melitensis biotype 1 (strain ATCC 23456 / CCUG 17765 / NCTC 10094 / 16M)</name>
    <dbReference type="NCBI Taxonomy" id="224914"/>
    <lineage>
        <taxon>Bacteria</taxon>
        <taxon>Pseudomonadati</taxon>
        <taxon>Pseudomonadota</taxon>
        <taxon>Alphaproteobacteria</taxon>
        <taxon>Hyphomicrobiales</taxon>
        <taxon>Brucellaceae</taxon>
        <taxon>Brucella/Ochrobactrum group</taxon>
        <taxon>Brucella</taxon>
    </lineage>
</organism>
<dbReference type="EMBL" id="AE008917">
    <property type="protein sequence ID" value="AAL51953.1"/>
    <property type="molecule type" value="Genomic_DNA"/>
</dbReference>
<dbReference type="PIR" id="AF3348">
    <property type="entry name" value="AF3348"/>
</dbReference>
<dbReference type="RefSeq" id="WP_004686961.1">
    <property type="nucleotide sequence ID" value="NC_003317.1"/>
</dbReference>
<dbReference type="SMR" id="Q8YHM5"/>
<dbReference type="GeneID" id="29593582"/>
<dbReference type="KEGG" id="bme:BMEI0772"/>
<dbReference type="KEGG" id="bmel:DK63_650"/>
<dbReference type="PATRIC" id="fig|224914.52.peg.681"/>
<dbReference type="eggNOG" id="COG0097">
    <property type="taxonomic scope" value="Bacteria"/>
</dbReference>
<dbReference type="PhylomeDB" id="Q8YHM5"/>
<dbReference type="Proteomes" id="UP000000419">
    <property type="component" value="Chromosome I"/>
</dbReference>
<dbReference type="GO" id="GO:0022625">
    <property type="term" value="C:cytosolic large ribosomal subunit"/>
    <property type="evidence" value="ECO:0007669"/>
    <property type="project" value="TreeGrafter"/>
</dbReference>
<dbReference type="GO" id="GO:0019843">
    <property type="term" value="F:rRNA binding"/>
    <property type="evidence" value="ECO:0007669"/>
    <property type="project" value="UniProtKB-UniRule"/>
</dbReference>
<dbReference type="GO" id="GO:0003735">
    <property type="term" value="F:structural constituent of ribosome"/>
    <property type="evidence" value="ECO:0007669"/>
    <property type="project" value="InterPro"/>
</dbReference>
<dbReference type="GO" id="GO:0002181">
    <property type="term" value="P:cytoplasmic translation"/>
    <property type="evidence" value="ECO:0007669"/>
    <property type="project" value="TreeGrafter"/>
</dbReference>
<dbReference type="FunFam" id="3.90.930.12:FF:000001">
    <property type="entry name" value="50S ribosomal protein L6"/>
    <property type="match status" value="1"/>
</dbReference>
<dbReference type="Gene3D" id="3.90.930.12">
    <property type="entry name" value="Ribosomal protein L6, alpha-beta domain"/>
    <property type="match status" value="2"/>
</dbReference>
<dbReference type="HAMAP" id="MF_01365_B">
    <property type="entry name" value="Ribosomal_uL6_B"/>
    <property type="match status" value="1"/>
</dbReference>
<dbReference type="InterPro" id="IPR000702">
    <property type="entry name" value="Ribosomal_uL6-like"/>
</dbReference>
<dbReference type="InterPro" id="IPR036789">
    <property type="entry name" value="Ribosomal_uL6-like_a/b-dom_sf"/>
</dbReference>
<dbReference type="InterPro" id="IPR020040">
    <property type="entry name" value="Ribosomal_uL6_a/b-dom"/>
</dbReference>
<dbReference type="InterPro" id="IPR019906">
    <property type="entry name" value="Ribosomal_uL6_bac-type"/>
</dbReference>
<dbReference type="InterPro" id="IPR002358">
    <property type="entry name" value="Ribosomal_uL6_CS"/>
</dbReference>
<dbReference type="NCBIfam" id="TIGR03654">
    <property type="entry name" value="L6_bact"/>
    <property type="match status" value="1"/>
</dbReference>
<dbReference type="PANTHER" id="PTHR11655">
    <property type="entry name" value="60S/50S RIBOSOMAL PROTEIN L6/L9"/>
    <property type="match status" value="1"/>
</dbReference>
<dbReference type="PANTHER" id="PTHR11655:SF14">
    <property type="entry name" value="LARGE RIBOSOMAL SUBUNIT PROTEIN UL6M"/>
    <property type="match status" value="1"/>
</dbReference>
<dbReference type="Pfam" id="PF00347">
    <property type="entry name" value="Ribosomal_L6"/>
    <property type="match status" value="2"/>
</dbReference>
<dbReference type="PIRSF" id="PIRSF002162">
    <property type="entry name" value="Ribosomal_L6"/>
    <property type="match status" value="1"/>
</dbReference>
<dbReference type="PRINTS" id="PR00059">
    <property type="entry name" value="RIBOSOMALL6"/>
</dbReference>
<dbReference type="SUPFAM" id="SSF56053">
    <property type="entry name" value="Ribosomal protein L6"/>
    <property type="match status" value="2"/>
</dbReference>
<dbReference type="PROSITE" id="PS00525">
    <property type="entry name" value="RIBOSOMAL_L6_1"/>
    <property type="match status" value="1"/>
</dbReference>
<comment type="function">
    <text evidence="1">This protein binds to the 23S rRNA, and is important in its secondary structure. It is located near the subunit interface in the base of the L7/L12 stalk, and near the tRNA binding site of the peptidyltransferase center.</text>
</comment>
<comment type="subunit">
    <text evidence="1">Part of the 50S ribosomal subunit.</text>
</comment>
<comment type="similarity">
    <text evidence="1">Belongs to the universal ribosomal protein uL6 family.</text>
</comment>
<proteinExistence type="inferred from homology"/>
<sequence>MSRIGKKPVPVPAGVTASVEGQTVKAKGAKGELSFVVHDEVLVKMEDGAVRVDPRDQSREARSKWGMSRTMISNIFVGVKDGFEKKLEISGVGYRAAMQGKNLQLSLGFSHEVVYDVPAGITVAVPKPTEIVVTGIDKQQVGQVAAEIREYRGPEPYKGKGVKYAGEKIVRKEGKKK</sequence>
<name>RL6_BRUME</name>
<reference key="1">
    <citation type="journal article" date="2002" name="Proc. Natl. Acad. Sci. U.S.A.">
        <title>The genome sequence of the facultative intracellular pathogen Brucella melitensis.</title>
        <authorList>
            <person name="DelVecchio V.G."/>
            <person name="Kapatral V."/>
            <person name="Redkar R.J."/>
            <person name="Patra G."/>
            <person name="Mujer C."/>
            <person name="Los T."/>
            <person name="Ivanova N."/>
            <person name="Anderson I."/>
            <person name="Bhattacharyya A."/>
            <person name="Lykidis A."/>
            <person name="Reznik G."/>
            <person name="Jablonski L."/>
            <person name="Larsen N."/>
            <person name="D'Souza M."/>
            <person name="Bernal A."/>
            <person name="Mazur M."/>
            <person name="Goltsman E."/>
            <person name="Selkov E."/>
            <person name="Elzer P.H."/>
            <person name="Hagius S."/>
            <person name="O'Callaghan D."/>
            <person name="Letesson J.-J."/>
            <person name="Haselkorn R."/>
            <person name="Kyrpides N.C."/>
            <person name="Overbeek R."/>
        </authorList>
    </citation>
    <scope>NUCLEOTIDE SEQUENCE [LARGE SCALE GENOMIC DNA]</scope>
    <source>
        <strain>ATCC 23456 / CCUG 17765 / NCTC 10094 / 16M</strain>
    </source>
</reference>
<feature type="chain" id="PRO_0000265228" description="Large ribosomal subunit protein uL6">
    <location>
        <begin position="1"/>
        <end position="177"/>
    </location>
</feature>
<keyword id="KW-0687">Ribonucleoprotein</keyword>
<keyword id="KW-0689">Ribosomal protein</keyword>
<keyword id="KW-0694">RNA-binding</keyword>
<keyword id="KW-0699">rRNA-binding</keyword>